<reference key="1">
    <citation type="journal article" date="2002" name="Nature">
        <title>Complete genome sequence of the model actinomycete Streptomyces coelicolor A3(2).</title>
        <authorList>
            <person name="Bentley S.D."/>
            <person name="Chater K.F."/>
            <person name="Cerdeno-Tarraga A.-M."/>
            <person name="Challis G.L."/>
            <person name="Thomson N.R."/>
            <person name="James K.D."/>
            <person name="Harris D.E."/>
            <person name="Quail M.A."/>
            <person name="Kieser H."/>
            <person name="Harper D."/>
            <person name="Bateman A."/>
            <person name="Brown S."/>
            <person name="Chandra G."/>
            <person name="Chen C.W."/>
            <person name="Collins M."/>
            <person name="Cronin A."/>
            <person name="Fraser A."/>
            <person name="Goble A."/>
            <person name="Hidalgo J."/>
            <person name="Hornsby T."/>
            <person name="Howarth S."/>
            <person name="Huang C.-H."/>
            <person name="Kieser T."/>
            <person name="Larke L."/>
            <person name="Murphy L.D."/>
            <person name="Oliver K."/>
            <person name="O'Neil S."/>
            <person name="Rabbinowitsch E."/>
            <person name="Rajandream M.A."/>
            <person name="Rutherford K.M."/>
            <person name="Rutter S."/>
            <person name="Seeger K."/>
            <person name="Saunders D."/>
            <person name="Sharp S."/>
            <person name="Squares R."/>
            <person name="Squares S."/>
            <person name="Taylor K."/>
            <person name="Warren T."/>
            <person name="Wietzorrek A."/>
            <person name="Woodward J.R."/>
            <person name="Barrell B.G."/>
            <person name="Parkhill J."/>
            <person name="Hopwood D.A."/>
        </authorList>
    </citation>
    <scope>NUCLEOTIDE SEQUENCE [LARGE SCALE GENOMIC DNA]</scope>
    <source>
        <strain>ATCC BAA-471 / A3(2) / M145</strain>
    </source>
</reference>
<reference key="2">
    <citation type="journal article" date="2007" name="J. Microbiol. Biotechnol.">
        <title>The analysis and application of a recombinant monooxygenase library as a biocatalyst for the Baeyer-Villiger reaction.</title>
        <authorList>
            <person name="Park J."/>
            <person name="Kim D."/>
            <person name="Kim S."/>
            <person name="Kim J."/>
            <person name="Bae K."/>
            <person name="Lee C."/>
        </authorList>
    </citation>
    <scope>FUNCTION</scope>
    <scope>CATALYTIC ACTIVITY</scope>
    <source>
        <strain>ATCC BAA-471 / A3(2) / M145</strain>
    </source>
</reference>
<accession>Q9RKB5</accession>
<comment type="function">
    <text evidence="4">Catalyzes a Baeyer-Villiger oxidation reaction, i.e. the insertion of an oxygen atom into a carbon-carbon bond adjacent to a carbonyl, which converts ketones to esters or lactones using NADPH and/or NADH as an electron donor. Thus, can convert bicyclo[3.2.0]hept-2-en-6-one into the oxidative lactone products 2-oxabicyclo[3.3.0]oct-6-en-3-one and 3-oxabicyclo[3.3.0]oct-6-en-2-one. Is also able to catalyze the sulfoxidation of methyl phenyl sulfide (thioanisole).</text>
</comment>
<comment type="cofactor">
    <cofactor evidence="2">
        <name>FAD</name>
        <dbReference type="ChEBI" id="CHEBI:57692"/>
    </cofactor>
</comment>
<comment type="similarity">
    <text evidence="6">Belongs to the FAD-binding monooxygenase family.</text>
</comment>
<gene>
    <name evidence="7" type="ordered locus">SCO3172</name>
</gene>
<proteinExistence type="evidence at protein level"/>
<protein>
    <recommendedName>
        <fullName evidence="5">Baeyer-Villiger monooxygenase</fullName>
        <shortName evidence="5">BVMO</shortName>
        <ecNumber evidence="4">1.14.13.-</ecNumber>
    </recommendedName>
</protein>
<sequence>MAEHEQVHEHVRVAVIGSGFGGLGAAVRLRREGITDFVVLERAGSVGGTWRDNSYPGCACDVPSHLYSFSFAPNPEWPRTFSGQEHIRAYLEHVADTFGLRPHLRFDSEVKRMAWDTEQLRWEIETVRGTLTADVVVSATGPLSDPKVPDIPGLDTFPGKVFHSARWDHDYDLAGQRVAMIGTGASAIQIVPSIQPKVDRLTLFQRTPAWVMPRVDRAISGAERALHRALPATTKLRRGLLWGIRELQVQAFTKHPNELGFVEQIAKRNMGAAIKDPALRAKLTPDYRIGCKRILLSSTYYPALAKPNVDVVASGLSEVRGSTLVAADGTEAEADAIVFGTGFHVTDMPIAERVVGADGRTLAETWKGGMEALRGGTAAGFPNFMTVIGPNTGLGNSSMILMIESQLNYLADYLRQLNVLGGRTALDPRPAAVRNWNHRVQERMKRTVWNTGGCTSWYLDASGRNTTVWPGTTAEFRRETRRVDLAEYQVLRPAPAQVGAKAAEADTGADTGADAEVSA</sequence>
<feature type="chain" id="PRO_0000431627" description="Baeyer-Villiger monooxygenase">
    <location>
        <begin position="1"/>
        <end position="519"/>
    </location>
</feature>
<feature type="region of interest" description="Disordered" evidence="3">
    <location>
        <begin position="499"/>
        <end position="519"/>
    </location>
</feature>
<feature type="binding site" evidence="1">
    <location>
        <position position="41"/>
    </location>
    <ligand>
        <name>FAD</name>
        <dbReference type="ChEBI" id="CHEBI:57692"/>
    </ligand>
</feature>
<feature type="binding site" evidence="1">
    <location>
        <begin position="49"/>
        <end position="52"/>
    </location>
    <ligand>
        <name>FAD</name>
        <dbReference type="ChEBI" id="CHEBI:57692"/>
    </ligand>
</feature>
<feature type="binding site" evidence="1">
    <location>
        <begin position="59"/>
        <end position="61"/>
    </location>
    <ligand>
        <name>NADP(+)</name>
        <dbReference type="ChEBI" id="CHEBI:58349"/>
    </ligand>
</feature>
<feature type="binding site" evidence="1">
    <location>
        <position position="61"/>
    </location>
    <ligand>
        <name>FAD</name>
        <dbReference type="ChEBI" id="CHEBI:57692"/>
    </ligand>
</feature>
<feature type="binding site" evidence="1">
    <location>
        <position position="67"/>
    </location>
    <ligand>
        <name>FAD</name>
        <dbReference type="ChEBI" id="CHEBI:57692"/>
    </ligand>
</feature>
<feature type="binding site" evidence="1">
    <location>
        <position position="110"/>
    </location>
    <ligand>
        <name>FAD</name>
        <dbReference type="ChEBI" id="CHEBI:57692"/>
    </ligand>
</feature>
<feature type="binding site" evidence="1">
    <location>
        <begin position="183"/>
        <end position="189"/>
    </location>
    <ligand>
        <name>NADP(+)</name>
        <dbReference type="ChEBI" id="CHEBI:58349"/>
    </ligand>
</feature>
<feature type="binding site" evidence="1">
    <location>
        <begin position="206"/>
        <end position="207"/>
    </location>
    <ligand>
        <name>NADP(+)</name>
        <dbReference type="ChEBI" id="CHEBI:58349"/>
    </ligand>
</feature>
<feature type="binding site" evidence="1">
    <location>
        <begin position="292"/>
        <end position="293"/>
    </location>
    <ligand>
        <name>NADP(+)</name>
        <dbReference type="ChEBI" id="CHEBI:58349"/>
    </ligand>
</feature>
<feature type="binding site" evidence="1">
    <location>
        <position position="399"/>
    </location>
    <ligand>
        <name>FAD</name>
        <dbReference type="ChEBI" id="CHEBI:57692"/>
    </ligand>
</feature>
<feature type="site" description="Transition state stabilizer" evidence="1">
    <location>
        <position position="293"/>
    </location>
</feature>
<dbReference type="EC" id="1.14.13.-" evidence="4"/>
<dbReference type="EMBL" id="AL939115">
    <property type="protein sequence ID" value="CAB59668.1"/>
    <property type="molecule type" value="Genomic_DNA"/>
</dbReference>
<dbReference type="RefSeq" id="NP_627388.1">
    <property type="nucleotide sequence ID" value="NC_003888.3"/>
</dbReference>
<dbReference type="RefSeq" id="WP_011028809.1">
    <property type="nucleotide sequence ID" value="NZ_VNID01000013.1"/>
</dbReference>
<dbReference type="SMR" id="Q9RKB5"/>
<dbReference type="FunCoup" id="Q9RKB5">
    <property type="interactions" value="77"/>
</dbReference>
<dbReference type="STRING" id="100226.gene:17760789"/>
<dbReference type="PaxDb" id="100226-SCO3172"/>
<dbReference type="KEGG" id="sco:SCO3172"/>
<dbReference type="PATRIC" id="fig|100226.15.peg.3232"/>
<dbReference type="eggNOG" id="COG2072">
    <property type="taxonomic scope" value="Bacteria"/>
</dbReference>
<dbReference type="HOGENOM" id="CLU_006937_7_1_11"/>
<dbReference type="InParanoid" id="Q9RKB5"/>
<dbReference type="OrthoDB" id="5168853at2"/>
<dbReference type="PhylomeDB" id="Q9RKB5"/>
<dbReference type="Proteomes" id="UP000001973">
    <property type="component" value="Chromosome"/>
</dbReference>
<dbReference type="GO" id="GO:0050660">
    <property type="term" value="F:flavin adenine dinucleotide binding"/>
    <property type="evidence" value="ECO:0007669"/>
    <property type="project" value="InterPro"/>
</dbReference>
<dbReference type="GO" id="GO:0004499">
    <property type="term" value="F:N,N-dimethylaniline monooxygenase activity"/>
    <property type="evidence" value="ECO:0007669"/>
    <property type="project" value="InterPro"/>
</dbReference>
<dbReference type="GO" id="GO:0050661">
    <property type="term" value="F:NADP binding"/>
    <property type="evidence" value="ECO:0007669"/>
    <property type="project" value="InterPro"/>
</dbReference>
<dbReference type="GO" id="GO:0016709">
    <property type="term" value="F:oxidoreductase activity, acting on paired donors, with incorporation or reduction of molecular oxygen, NAD(P)H as one donor, and incorporation of one atom of oxygen"/>
    <property type="evidence" value="ECO:0000314"/>
    <property type="project" value="UniProtKB"/>
</dbReference>
<dbReference type="FunFam" id="3.50.50.60:FF:000266">
    <property type="entry name" value="Baeyer-Villiger monooxygenase"/>
    <property type="match status" value="1"/>
</dbReference>
<dbReference type="FunFam" id="3.50.50.60:FF:000214">
    <property type="entry name" value="PROBABLE MONOOXYGENASE"/>
    <property type="match status" value="1"/>
</dbReference>
<dbReference type="Gene3D" id="3.50.50.60">
    <property type="entry name" value="FAD/NAD(P)-binding domain"/>
    <property type="match status" value="3"/>
</dbReference>
<dbReference type="InterPro" id="IPR051209">
    <property type="entry name" value="FAD-bind_Monooxygenase_sf"/>
</dbReference>
<dbReference type="InterPro" id="IPR036188">
    <property type="entry name" value="FAD/NAD-bd_sf"/>
</dbReference>
<dbReference type="InterPro" id="IPR020946">
    <property type="entry name" value="Flavin_mOase-like"/>
</dbReference>
<dbReference type="PANTHER" id="PTHR42877:SF4">
    <property type="entry name" value="FAD_NAD(P)-BINDING DOMAIN-CONTAINING PROTEIN-RELATED"/>
    <property type="match status" value="1"/>
</dbReference>
<dbReference type="PANTHER" id="PTHR42877">
    <property type="entry name" value="L-ORNITHINE N(5)-MONOOXYGENASE-RELATED"/>
    <property type="match status" value="1"/>
</dbReference>
<dbReference type="Pfam" id="PF00743">
    <property type="entry name" value="FMO-like"/>
    <property type="match status" value="1"/>
</dbReference>
<dbReference type="PRINTS" id="PR00419">
    <property type="entry name" value="ADXRDTASE"/>
</dbReference>
<dbReference type="SUPFAM" id="SSF51905">
    <property type="entry name" value="FAD/NAD(P)-binding domain"/>
    <property type="match status" value="2"/>
</dbReference>
<evidence type="ECO:0000250" key="1">
    <source>
        <dbReference type="UniProtKB" id="Q47PU3"/>
    </source>
</evidence>
<evidence type="ECO:0000250" key="2">
    <source>
        <dbReference type="UniProtKB" id="Q93TJ5"/>
    </source>
</evidence>
<evidence type="ECO:0000256" key="3">
    <source>
        <dbReference type="SAM" id="MobiDB-lite"/>
    </source>
</evidence>
<evidence type="ECO:0000269" key="4">
    <source>
    </source>
</evidence>
<evidence type="ECO:0000303" key="5">
    <source>
    </source>
</evidence>
<evidence type="ECO:0000305" key="6"/>
<evidence type="ECO:0000312" key="7">
    <source>
        <dbReference type="EMBL" id="CAB59668.1"/>
    </source>
</evidence>
<organism>
    <name type="scientific">Streptomyces coelicolor (strain ATCC BAA-471 / A3(2) / M145)</name>
    <dbReference type="NCBI Taxonomy" id="100226"/>
    <lineage>
        <taxon>Bacteria</taxon>
        <taxon>Bacillati</taxon>
        <taxon>Actinomycetota</taxon>
        <taxon>Actinomycetes</taxon>
        <taxon>Kitasatosporales</taxon>
        <taxon>Streptomycetaceae</taxon>
        <taxon>Streptomyces</taxon>
        <taxon>Streptomyces albidoflavus group</taxon>
    </lineage>
</organism>
<keyword id="KW-0274">FAD</keyword>
<keyword id="KW-0285">Flavoprotein</keyword>
<keyword id="KW-0503">Monooxygenase</keyword>
<keyword id="KW-0521">NADP</keyword>
<keyword id="KW-0560">Oxidoreductase</keyword>
<keyword id="KW-1185">Reference proteome</keyword>
<name>BVMO2_STRCO</name>